<comment type="function">
    <text evidence="1">One of the primary rRNA binding proteins, it binds directly to 16S rRNA where it nucleates assembly of the body of the 30S subunit.</text>
</comment>
<comment type="function">
    <text evidence="1">With S5 and S12 plays an important role in translational accuracy.</text>
</comment>
<comment type="subunit">
    <text evidence="1">Part of the 30S ribosomal subunit. Contacts protein S5. The interaction surface between S4 and S5 is involved in control of translational fidelity.</text>
</comment>
<comment type="similarity">
    <text evidence="1">Belongs to the universal ribosomal protein uS4 family.</text>
</comment>
<protein>
    <recommendedName>
        <fullName evidence="1">Small ribosomal subunit protein uS4</fullName>
    </recommendedName>
    <alternativeName>
        <fullName evidence="2">30S ribosomal protein S4</fullName>
    </alternativeName>
</protein>
<dbReference type="EMBL" id="CP000702">
    <property type="protein sequence ID" value="ABQ47333.1"/>
    <property type="molecule type" value="Genomic_DNA"/>
</dbReference>
<dbReference type="RefSeq" id="WP_011943801.1">
    <property type="nucleotide sequence ID" value="NC_009486.1"/>
</dbReference>
<dbReference type="SMR" id="A5IMB0"/>
<dbReference type="STRING" id="390874.Tpet_1319"/>
<dbReference type="KEGG" id="tpt:Tpet_1319"/>
<dbReference type="eggNOG" id="COG0522">
    <property type="taxonomic scope" value="Bacteria"/>
</dbReference>
<dbReference type="HOGENOM" id="CLU_092403_0_2_0"/>
<dbReference type="Proteomes" id="UP000006558">
    <property type="component" value="Chromosome"/>
</dbReference>
<dbReference type="GO" id="GO:0015935">
    <property type="term" value="C:small ribosomal subunit"/>
    <property type="evidence" value="ECO:0007669"/>
    <property type="project" value="InterPro"/>
</dbReference>
<dbReference type="GO" id="GO:0019843">
    <property type="term" value="F:rRNA binding"/>
    <property type="evidence" value="ECO:0007669"/>
    <property type="project" value="UniProtKB-UniRule"/>
</dbReference>
<dbReference type="GO" id="GO:0003735">
    <property type="term" value="F:structural constituent of ribosome"/>
    <property type="evidence" value="ECO:0007669"/>
    <property type="project" value="InterPro"/>
</dbReference>
<dbReference type="GO" id="GO:0042274">
    <property type="term" value="P:ribosomal small subunit biogenesis"/>
    <property type="evidence" value="ECO:0007669"/>
    <property type="project" value="TreeGrafter"/>
</dbReference>
<dbReference type="GO" id="GO:0006412">
    <property type="term" value="P:translation"/>
    <property type="evidence" value="ECO:0007669"/>
    <property type="project" value="UniProtKB-UniRule"/>
</dbReference>
<dbReference type="CDD" id="cd00165">
    <property type="entry name" value="S4"/>
    <property type="match status" value="1"/>
</dbReference>
<dbReference type="FunFam" id="1.10.1050.10:FF:000001">
    <property type="entry name" value="30S ribosomal protein S4"/>
    <property type="match status" value="1"/>
</dbReference>
<dbReference type="FunFam" id="3.10.290.10:FF:000001">
    <property type="entry name" value="30S ribosomal protein S4"/>
    <property type="match status" value="1"/>
</dbReference>
<dbReference type="Gene3D" id="1.10.1050.10">
    <property type="entry name" value="Ribosomal Protein S4 Delta 41, Chain A, domain 1"/>
    <property type="match status" value="1"/>
</dbReference>
<dbReference type="Gene3D" id="3.10.290.10">
    <property type="entry name" value="RNA-binding S4 domain"/>
    <property type="match status" value="1"/>
</dbReference>
<dbReference type="HAMAP" id="MF_01306_B">
    <property type="entry name" value="Ribosomal_uS4_B"/>
    <property type="match status" value="1"/>
</dbReference>
<dbReference type="InterPro" id="IPR022801">
    <property type="entry name" value="Ribosomal_uS4"/>
</dbReference>
<dbReference type="InterPro" id="IPR005709">
    <property type="entry name" value="Ribosomal_uS4_bac-type"/>
</dbReference>
<dbReference type="InterPro" id="IPR001912">
    <property type="entry name" value="Ribosomal_uS4_N"/>
</dbReference>
<dbReference type="InterPro" id="IPR002942">
    <property type="entry name" value="S4_RNA-bd"/>
</dbReference>
<dbReference type="InterPro" id="IPR036986">
    <property type="entry name" value="S4_RNA-bd_sf"/>
</dbReference>
<dbReference type="NCBIfam" id="NF003717">
    <property type="entry name" value="PRK05327.1"/>
    <property type="match status" value="1"/>
</dbReference>
<dbReference type="NCBIfam" id="TIGR01017">
    <property type="entry name" value="rpsD_bact"/>
    <property type="match status" value="1"/>
</dbReference>
<dbReference type="PANTHER" id="PTHR11831">
    <property type="entry name" value="30S 40S RIBOSOMAL PROTEIN"/>
    <property type="match status" value="1"/>
</dbReference>
<dbReference type="PANTHER" id="PTHR11831:SF4">
    <property type="entry name" value="SMALL RIBOSOMAL SUBUNIT PROTEIN US4M"/>
    <property type="match status" value="1"/>
</dbReference>
<dbReference type="Pfam" id="PF00163">
    <property type="entry name" value="Ribosomal_S4"/>
    <property type="match status" value="1"/>
</dbReference>
<dbReference type="Pfam" id="PF01479">
    <property type="entry name" value="S4"/>
    <property type="match status" value="1"/>
</dbReference>
<dbReference type="SMART" id="SM01390">
    <property type="entry name" value="Ribosomal_S4"/>
    <property type="match status" value="1"/>
</dbReference>
<dbReference type="SMART" id="SM00363">
    <property type="entry name" value="S4"/>
    <property type="match status" value="1"/>
</dbReference>
<dbReference type="SUPFAM" id="SSF55174">
    <property type="entry name" value="Alpha-L RNA-binding motif"/>
    <property type="match status" value="1"/>
</dbReference>
<dbReference type="PROSITE" id="PS50889">
    <property type="entry name" value="S4"/>
    <property type="match status" value="1"/>
</dbReference>
<organism>
    <name type="scientific">Thermotoga petrophila (strain ATCC BAA-488 / DSM 13995 / JCM 10881 / RKU-1)</name>
    <dbReference type="NCBI Taxonomy" id="390874"/>
    <lineage>
        <taxon>Bacteria</taxon>
        <taxon>Thermotogati</taxon>
        <taxon>Thermotogota</taxon>
        <taxon>Thermotogae</taxon>
        <taxon>Thermotogales</taxon>
        <taxon>Thermotogaceae</taxon>
        <taxon>Thermotoga</taxon>
    </lineage>
</organism>
<sequence>MARYTGPLCKLCRREGMKLYLKGERCYTDKCAFDRRPYAPGQHGQRRAKLTQYGIQLRAKQTVKRIYGILERQFERYVEKAMQKAGDTRENLIQILEARLDNVVYRMGFAINRRQARQLVNHGHFLVNGKKVNIPSYLLKPNDVVELREKSRDLEVIKKAVEANKERSVVPWIEVDYDNYRGTFLRYPSLEEVTDLPVDLQTVIEFYSR</sequence>
<reference key="1">
    <citation type="submission" date="2007-05" db="EMBL/GenBank/DDBJ databases">
        <title>Complete sequence of Thermotoga petrophila RKU-1.</title>
        <authorList>
            <consortium name="US DOE Joint Genome Institute"/>
            <person name="Copeland A."/>
            <person name="Lucas S."/>
            <person name="Lapidus A."/>
            <person name="Barry K."/>
            <person name="Glavina del Rio T."/>
            <person name="Dalin E."/>
            <person name="Tice H."/>
            <person name="Pitluck S."/>
            <person name="Sims D."/>
            <person name="Brettin T."/>
            <person name="Bruce D."/>
            <person name="Detter J.C."/>
            <person name="Han C."/>
            <person name="Tapia R."/>
            <person name="Schmutz J."/>
            <person name="Larimer F."/>
            <person name="Land M."/>
            <person name="Hauser L."/>
            <person name="Kyrpides N."/>
            <person name="Mikhailova N."/>
            <person name="Nelson K."/>
            <person name="Gogarten J.P."/>
            <person name="Noll K."/>
            <person name="Richardson P."/>
        </authorList>
    </citation>
    <scope>NUCLEOTIDE SEQUENCE [LARGE SCALE GENOMIC DNA]</scope>
    <source>
        <strain>ATCC BAA-488 / DSM 13995 / JCM 10881 / RKU-1</strain>
    </source>
</reference>
<proteinExistence type="inferred from homology"/>
<feature type="chain" id="PRO_0000322348" description="Small ribosomal subunit protein uS4">
    <location>
        <begin position="1"/>
        <end position="209"/>
    </location>
</feature>
<feature type="domain" description="S4 RNA-binding" evidence="1">
    <location>
        <begin position="98"/>
        <end position="161"/>
    </location>
</feature>
<keyword id="KW-0687">Ribonucleoprotein</keyword>
<keyword id="KW-0689">Ribosomal protein</keyword>
<keyword id="KW-0694">RNA-binding</keyword>
<keyword id="KW-0699">rRNA-binding</keyword>
<accession>A5IMB0</accession>
<evidence type="ECO:0000255" key="1">
    <source>
        <dbReference type="HAMAP-Rule" id="MF_01306"/>
    </source>
</evidence>
<evidence type="ECO:0000305" key="2"/>
<name>RS4_THEP1</name>
<gene>
    <name evidence="1" type="primary">rpsD</name>
    <name type="ordered locus">Tpet_1319</name>
</gene>